<feature type="chain" id="PRO_0000384326" description="Mitochondrial distribution and morphology protein 34">
    <location>
        <begin position="1"/>
        <end position="572"/>
    </location>
</feature>
<feature type="domain" description="SMP-LTD" evidence="1">
    <location>
        <begin position="1"/>
        <end position="195"/>
    </location>
</feature>
<feature type="region of interest" description="Disordered" evidence="2">
    <location>
        <begin position="212"/>
        <end position="236"/>
    </location>
</feature>
<feature type="region of interest" description="Disordered" evidence="2">
    <location>
        <begin position="355"/>
        <end position="426"/>
    </location>
</feature>
<feature type="region of interest" description="Disordered" evidence="2">
    <location>
        <begin position="487"/>
        <end position="507"/>
    </location>
</feature>
<feature type="region of interest" description="Disordered" evidence="2">
    <location>
        <begin position="552"/>
        <end position="572"/>
    </location>
</feature>
<feature type="compositionally biased region" description="Basic residues" evidence="2">
    <location>
        <begin position="358"/>
        <end position="370"/>
    </location>
</feature>
<feature type="compositionally biased region" description="Basic and acidic residues" evidence="2">
    <location>
        <begin position="371"/>
        <end position="381"/>
    </location>
</feature>
<feature type="compositionally biased region" description="Polar residues" evidence="2">
    <location>
        <begin position="387"/>
        <end position="400"/>
    </location>
</feature>
<accession>Q4WPP2</accession>
<evidence type="ECO:0000255" key="1">
    <source>
        <dbReference type="HAMAP-Rule" id="MF_03105"/>
    </source>
</evidence>
<evidence type="ECO:0000256" key="2">
    <source>
        <dbReference type="SAM" id="MobiDB-lite"/>
    </source>
</evidence>
<name>MDM34_ASPFU</name>
<sequence>MAFNFNWSPLMADASFYTRAQDLLTAALNKSPKPPIIVDDIIVTELNLGSIPPELEILEIGDLAEDRFRGIFKMSYSGDAFLTLKTRVQANPLNTYLLTRPSFATPRPLAAATPLTIPLQITLSDFKLSGFVILVFSKQKGITVVFRNDPLESLKVSSTFDSIPFVRDFLQKEIEAQLRILFMDELPAIIHRLSLRLWVPEYRAGEELQTQTASANGEGPGQDPLASPPQDPVDALGNALNESEIESLSLDSSVETHSLFSQKNLLRLAALTDSQRTLSLFTPSIREVVYRAWTSPSDQTDASGSVTSPFFPVLSRTQSQVGSMSSFPDSASMVSSQSRSSTPFHTFSGYGLSLGAGRHSKAHARKRKKRVVDLRRPKTTDDAPSVSDESSFTESTSAPSICSAPLPVLDEQTDDPVTPPLSPDNDLHLPAIPERHRMSISRPALRRENASEMIRDTAECKPSSNAVGQAIQEEDLSATPRAAVRAHGASVLEKGKQDPDSSAGSSRQLSSTILPFINDNPTGGVVDQALVERLAGEIARRMRDEKFMASNACGPFWDRHSQEESPPPAYGH</sequence>
<organism>
    <name type="scientific">Aspergillus fumigatus (strain ATCC MYA-4609 / CBS 101355 / FGSC A1100 / Af293)</name>
    <name type="common">Neosartorya fumigata</name>
    <dbReference type="NCBI Taxonomy" id="330879"/>
    <lineage>
        <taxon>Eukaryota</taxon>
        <taxon>Fungi</taxon>
        <taxon>Dikarya</taxon>
        <taxon>Ascomycota</taxon>
        <taxon>Pezizomycotina</taxon>
        <taxon>Eurotiomycetes</taxon>
        <taxon>Eurotiomycetidae</taxon>
        <taxon>Eurotiales</taxon>
        <taxon>Aspergillaceae</taxon>
        <taxon>Aspergillus</taxon>
        <taxon>Aspergillus subgen. Fumigati</taxon>
    </lineage>
</organism>
<protein>
    <recommendedName>
        <fullName evidence="1">Mitochondrial distribution and morphology protein 34</fullName>
    </recommendedName>
</protein>
<keyword id="KW-0445">Lipid transport</keyword>
<keyword id="KW-0446">Lipid-binding</keyword>
<keyword id="KW-0472">Membrane</keyword>
<keyword id="KW-0496">Mitochondrion</keyword>
<keyword id="KW-1000">Mitochondrion outer membrane</keyword>
<keyword id="KW-1185">Reference proteome</keyword>
<keyword id="KW-0812">Transmembrane</keyword>
<keyword id="KW-1134">Transmembrane beta strand</keyword>
<keyword id="KW-0813">Transport</keyword>
<gene>
    <name evidence="1" type="primary">mdm34</name>
    <name type="ORF">AFUA_4G09960</name>
</gene>
<reference key="1">
    <citation type="journal article" date="2005" name="Nature">
        <title>Genomic sequence of the pathogenic and allergenic filamentous fungus Aspergillus fumigatus.</title>
        <authorList>
            <person name="Nierman W.C."/>
            <person name="Pain A."/>
            <person name="Anderson M.J."/>
            <person name="Wortman J.R."/>
            <person name="Kim H.S."/>
            <person name="Arroyo J."/>
            <person name="Berriman M."/>
            <person name="Abe K."/>
            <person name="Archer D.B."/>
            <person name="Bermejo C."/>
            <person name="Bennett J.W."/>
            <person name="Bowyer P."/>
            <person name="Chen D."/>
            <person name="Collins M."/>
            <person name="Coulsen R."/>
            <person name="Davies R."/>
            <person name="Dyer P.S."/>
            <person name="Farman M.L."/>
            <person name="Fedorova N."/>
            <person name="Fedorova N.D."/>
            <person name="Feldblyum T.V."/>
            <person name="Fischer R."/>
            <person name="Fosker N."/>
            <person name="Fraser A."/>
            <person name="Garcia J.L."/>
            <person name="Garcia M.J."/>
            <person name="Goble A."/>
            <person name="Goldman G.H."/>
            <person name="Gomi K."/>
            <person name="Griffith-Jones S."/>
            <person name="Gwilliam R."/>
            <person name="Haas B.J."/>
            <person name="Haas H."/>
            <person name="Harris D.E."/>
            <person name="Horiuchi H."/>
            <person name="Huang J."/>
            <person name="Humphray S."/>
            <person name="Jimenez J."/>
            <person name="Keller N."/>
            <person name="Khouri H."/>
            <person name="Kitamoto K."/>
            <person name="Kobayashi T."/>
            <person name="Konzack S."/>
            <person name="Kulkarni R."/>
            <person name="Kumagai T."/>
            <person name="Lafton A."/>
            <person name="Latge J.-P."/>
            <person name="Li W."/>
            <person name="Lord A."/>
            <person name="Lu C."/>
            <person name="Majoros W.H."/>
            <person name="May G.S."/>
            <person name="Miller B.L."/>
            <person name="Mohamoud Y."/>
            <person name="Molina M."/>
            <person name="Monod M."/>
            <person name="Mouyna I."/>
            <person name="Mulligan S."/>
            <person name="Murphy L.D."/>
            <person name="O'Neil S."/>
            <person name="Paulsen I."/>
            <person name="Penalva M.A."/>
            <person name="Pertea M."/>
            <person name="Price C."/>
            <person name="Pritchard B.L."/>
            <person name="Quail M.A."/>
            <person name="Rabbinowitsch E."/>
            <person name="Rawlins N."/>
            <person name="Rajandream M.A."/>
            <person name="Reichard U."/>
            <person name="Renauld H."/>
            <person name="Robson G.D."/>
            <person name="Rodriguez de Cordoba S."/>
            <person name="Rodriguez-Pena J.M."/>
            <person name="Ronning C.M."/>
            <person name="Rutter S."/>
            <person name="Salzberg S.L."/>
            <person name="Sanchez M."/>
            <person name="Sanchez-Ferrero J.C."/>
            <person name="Saunders D."/>
            <person name="Seeger K."/>
            <person name="Squares R."/>
            <person name="Squares S."/>
            <person name="Takeuchi M."/>
            <person name="Tekaia F."/>
            <person name="Turner G."/>
            <person name="Vazquez de Aldana C.R."/>
            <person name="Weidman J."/>
            <person name="White O."/>
            <person name="Woodward J.R."/>
            <person name="Yu J.-H."/>
            <person name="Fraser C.M."/>
            <person name="Galagan J.E."/>
            <person name="Asai K."/>
            <person name="Machida M."/>
            <person name="Hall N."/>
            <person name="Barrell B.G."/>
            <person name="Denning D.W."/>
        </authorList>
    </citation>
    <scope>NUCLEOTIDE SEQUENCE [LARGE SCALE GENOMIC DNA]</scope>
    <source>
        <strain>ATCC MYA-4609 / CBS 101355 / FGSC A1100 / Af293</strain>
    </source>
</reference>
<comment type="function">
    <text evidence="1">Component of the ERMES/MDM complex, which serves as a molecular tether to connect the endoplasmic reticulum (ER) and mitochondria. Components of this complex are involved in the control of mitochondrial shape and protein biogenesis, and function in nonvesicular lipid trafficking between the ER and mitochondria. Mdm34 is required for the interaction of the ER-resident membrane protein mmm1 and the outer mitochondrial membrane-resident beta-barrel protein mdm10.</text>
</comment>
<comment type="subunit">
    <text evidence="1">Component of the ER-mitochondria encounter structure (ERMES) or MDM complex, composed of mmm1, mdm10, mdm12 and mdm34.</text>
</comment>
<comment type="subcellular location">
    <subcellularLocation>
        <location evidence="1">Mitochondrion outer membrane</location>
        <topology evidence="1">Multi-pass membrane protein</topology>
    </subcellularLocation>
    <text evidence="1">The ERMES/MDM complex localizes to a few discrete foci (around 10 per single cell), that represent mitochondria-endoplasmic reticulum junctions. These foci are often found next to mtDNA nucleoids.</text>
</comment>
<comment type="domain">
    <text evidence="1">Lacks alpha-helical transmembrane segments, suggesting that it resides in the membrane via beta-sheet conformations similar to those predicted for other outer membrane proteins and porin.</text>
</comment>
<comment type="domain">
    <text evidence="1">The SMP-LTD domain is a barrel-like domain that can bind various types of glycerophospholipids in its interior and mediate their transfer between two adjacent bilayers.</text>
</comment>
<comment type="similarity">
    <text evidence="1">Belongs to the MDM34 family.</text>
</comment>
<dbReference type="EMBL" id="AAHF01000005">
    <property type="protein sequence ID" value="EAL89792.1"/>
    <property type="molecule type" value="Genomic_DNA"/>
</dbReference>
<dbReference type="RefSeq" id="XP_751830.1">
    <property type="nucleotide sequence ID" value="XM_746737.1"/>
</dbReference>
<dbReference type="SMR" id="Q4WPP2"/>
<dbReference type="FunCoup" id="Q4WPP2">
    <property type="interactions" value="51"/>
</dbReference>
<dbReference type="STRING" id="330879.Q4WPP2"/>
<dbReference type="EnsemblFungi" id="EAL89792">
    <property type="protein sequence ID" value="EAL89792"/>
    <property type="gene ID" value="AFUA_4G09960"/>
</dbReference>
<dbReference type="GeneID" id="3509570"/>
<dbReference type="KEGG" id="afm:AFUA_4G09960"/>
<dbReference type="VEuPathDB" id="FungiDB:Afu4g09960"/>
<dbReference type="eggNOG" id="ENOG502QT3W">
    <property type="taxonomic scope" value="Eukaryota"/>
</dbReference>
<dbReference type="HOGENOM" id="CLU_036502_1_0_1"/>
<dbReference type="InParanoid" id="Q4WPP2"/>
<dbReference type="OMA" id="VFRAWSG"/>
<dbReference type="OrthoDB" id="17927at2759"/>
<dbReference type="Proteomes" id="UP000002530">
    <property type="component" value="Chromosome 4"/>
</dbReference>
<dbReference type="GO" id="GO:0032865">
    <property type="term" value="C:ERMES complex"/>
    <property type="evidence" value="ECO:0000318"/>
    <property type="project" value="GO_Central"/>
</dbReference>
<dbReference type="GO" id="GO:0008289">
    <property type="term" value="F:lipid binding"/>
    <property type="evidence" value="ECO:0007669"/>
    <property type="project" value="UniProtKB-KW"/>
</dbReference>
<dbReference type="GO" id="GO:0000002">
    <property type="term" value="P:mitochondrial genome maintenance"/>
    <property type="evidence" value="ECO:0007669"/>
    <property type="project" value="UniProtKB-UniRule"/>
</dbReference>
<dbReference type="GO" id="GO:0007005">
    <property type="term" value="P:mitochondrion organization"/>
    <property type="evidence" value="ECO:0000318"/>
    <property type="project" value="GO_Central"/>
</dbReference>
<dbReference type="GO" id="GO:1990456">
    <property type="term" value="P:mitochondrion-endoplasmic reticulum membrane tethering"/>
    <property type="evidence" value="ECO:0000318"/>
    <property type="project" value="GO_Central"/>
</dbReference>
<dbReference type="GO" id="GO:0015914">
    <property type="term" value="P:phospholipid transport"/>
    <property type="evidence" value="ECO:0000318"/>
    <property type="project" value="GO_Central"/>
</dbReference>
<dbReference type="CDD" id="cd21673">
    <property type="entry name" value="SMP_Mdm34"/>
    <property type="match status" value="1"/>
</dbReference>
<dbReference type="HAMAP" id="MF_03105">
    <property type="entry name" value="Mdm34"/>
    <property type="match status" value="1"/>
</dbReference>
<dbReference type="InterPro" id="IPR027536">
    <property type="entry name" value="Mdm34"/>
</dbReference>
<dbReference type="InterPro" id="IPR031468">
    <property type="entry name" value="SMP_LBD"/>
</dbReference>
<dbReference type="PANTHER" id="PTHR28185">
    <property type="entry name" value="MITOCHONDRIAL DISTRIBUTION AND MORPHOLOGY PROTEIN 34"/>
    <property type="match status" value="1"/>
</dbReference>
<dbReference type="PANTHER" id="PTHR28185:SF1">
    <property type="entry name" value="MITOCHONDRIAL DISTRIBUTION AND MORPHOLOGY PROTEIN 34"/>
    <property type="match status" value="1"/>
</dbReference>
<dbReference type="PROSITE" id="PS51847">
    <property type="entry name" value="SMP"/>
    <property type="match status" value="1"/>
</dbReference>
<proteinExistence type="inferred from homology"/>